<feature type="chain" id="PRO_0000099669" description="Uncharacterized 7.9 kDa protein">
    <location>
        <begin position="1"/>
        <end position="66"/>
    </location>
</feature>
<sequence length="66" mass="7852">MYVHSSNLTDTISYPDVVINYRSWTKCTHFFGLLFDSRIIMLNFSIYSVSCFKYVMMNPYSFQTQV</sequence>
<keyword id="KW-1185">Reference proteome</keyword>
<dbReference type="EMBL" id="M35027">
    <property type="protein sequence ID" value="AAA48197.1"/>
    <property type="molecule type" value="Genomic_DNA"/>
</dbReference>
<dbReference type="PIR" id="C42529">
    <property type="entry name" value="C42529"/>
</dbReference>
<dbReference type="Proteomes" id="UP000008269">
    <property type="component" value="Segment"/>
</dbReference>
<organism>
    <name type="scientific">Vaccinia virus (strain Copenhagen)</name>
    <name type="common">VACV</name>
    <dbReference type="NCBI Taxonomy" id="10249"/>
    <lineage>
        <taxon>Viruses</taxon>
        <taxon>Varidnaviria</taxon>
        <taxon>Bamfordvirae</taxon>
        <taxon>Nucleocytoviricota</taxon>
        <taxon>Pokkesviricetes</taxon>
        <taxon>Chitovirales</taxon>
        <taxon>Poxviridae</taxon>
        <taxon>Chordopoxvirinae</taxon>
        <taxon>Orthopoxvirus</taxon>
        <taxon>Vaccinia virus</taxon>
    </lineage>
</organism>
<organismHost>
    <name type="scientific">Homo sapiens</name>
    <name type="common">Human</name>
    <dbReference type="NCBI Taxonomy" id="9606"/>
</organismHost>
<name>YVBB_VACCC</name>
<proteinExistence type="predicted"/>
<protein>
    <recommendedName>
        <fullName>Uncharacterized 7.9 kDa protein</fullName>
    </recommendedName>
</protein>
<accession>P20542</accession>
<gene>
    <name type="ORF">B ORF B</name>
</gene>
<reference key="1">
    <citation type="journal article" date="1990" name="Virology">
        <title>The complete DNA sequence of vaccinia virus.</title>
        <authorList>
            <person name="Goebel S.J."/>
            <person name="Johnson G.P."/>
            <person name="Perkus M.E."/>
            <person name="Davis S.W."/>
            <person name="Winslow J.P."/>
            <person name="Paoletti E."/>
        </authorList>
    </citation>
    <scope>NUCLEOTIDE SEQUENCE [LARGE SCALE GENOMIC DNA]</scope>
</reference>
<reference key="2">
    <citation type="journal article" date="1990" name="Virology">
        <title>Appendix to 'The complete DNA sequence of vaccinia virus'.</title>
        <authorList>
            <person name="Goebel S.J."/>
            <person name="Johnson G.P."/>
            <person name="Perkus M.E."/>
            <person name="Davis S.W."/>
            <person name="Winslow J.P."/>
            <person name="Paoletti E."/>
        </authorList>
    </citation>
    <scope>COMPLETE GENOME</scope>
</reference>